<keyword id="KW-1185">Reference proteome</keyword>
<keyword id="KW-0687">Ribonucleoprotein</keyword>
<keyword id="KW-0689">Ribosomal protein</keyword>
<keyword id="KW-0694">RNA-binding</keyword>
<keyword id="KW-0699">rRNA-binding</keyword>
<feature type="chain" id="PRO_1000052520" description="Large ribosomal subunit protein uL4">
    <location>
        <begin position="1"/>
        <end position="207"/>
    </location>
</feature>
<feature type="region of interest" description="Disordered" evidence="2">
    <location>
        <begin position="47"/>
        <end position="78"/>
    </location>
</feature>
<feature type="compositionally biased region" description="Basic residues" evidence="2">
    <location>
        <begin position="60"/>
        <end position="71"/>
    </location>
</feature>
<dbReference type="EMBL" id="CP000448">
    <property type="protein sequence ID" value="ABI69623.1"/>
    <property type="molecule type" value="Genomic_DNA"/>
</dbReference>
<dbReference type="RefSeq" id="WP_011641707.1">
    <property type="nucleotide sequence ID" value="NC_008346.1"/>
</dbReference>
<dbReference type="SMR" id="Q0AUI1"/>
<dbReference type="STRING" id="335541.Swol_2332"/>
<dbReference type="KEGG" id="swo:Swol_2332"/>
<dbReference type="eggNOG" id="COG0088">
    <property type="taxonomic scope" value="Bacteria"/>
</dbReference>
<dbReference type="HOGENOM" id="CLU_041575_5_2_9"/>
<dbReference type="OrthoDB" id="9803201at2"/>
<dbReference type="Proteomes" id="UP000001968">
    <property type="component" value="Chromosome"/>
</dbReference>
<dbReference type="GO" id="GO:1990904">
    <property type="term" value="C:ribonucleoprotein complex"/>
    <property type="evidence" value="ECO:0007669"/>
    <property type="project" value="UniProtKB-KW"/>
</dbReference>
<dbReference type="GO" id="GO:0005840">
    <property type="term" value="C:ribosome"/>
    <property type="evidence" value="ECO:0007669"/>
    <property type="project" value="UniProtKB-KW"/>
</dbReference>
<dbReference type="GO" id="GO:0019843">
    <property type="term" value="F:rRNA binding"/>
    <property type="evidence" value="ECO:0007669"/>
    <property type="project" value="UniProtKB-UniRule"/>
</dbReference>
<dbReference type="GO" id="GO:0003735">
    <property type="term" value="F:structural constituent of ribosome"/>
    <property type="evidence" value="ECO:0007669"/>
    <property type="project" value="InterPro"/>
</dbReference>
<dbReference type="GO" id="GO:0006412">
    <property type="term" value="P:translation"/>
    <property type="evidence" value="ECO:0007669"/>
    <property type="project" value="UniProtKB-UniRule"/>
</dbReference>
<dbReference type="Gene3D" id="3.40.1370.10">
    <property type="match status" value="1"/>
</dbReference>
<dbReference type="HAMAP" id="MF_01328_B">
    <property type="entry name" value="Ribosomal_uL4_B"/>
    <property type="match status" value="1"/>
</dbReference>
<dbReference type="InterPro" id="IPR002136">
    <property type="entry name" value="Ribosomal_uL4"/>
</dbReference>
<dbReference type="InterPro" id="IPR013005">
    <property type="entry name" value="Ribosomal_uL4-like"/>
</dbReference>
<dbReference type="InterPro" id="IPR023574">
    <property type="entry name" value="Ribosomal_uL4_dom_sf"/>
</dbReference>
<dbReference type="NCBIfam" id="TIGR03953">
    <property type="entry name" value="rplD_bact"/>
    <property type="match status" value="1"/>
</dbReference>
<dbReference type="PANTHER" id="PTHR10746">
    <property type="entry name" value="50S RIBOSOMAL PROTEIN L4"/>
    <property type="match status" value="1"/>
</dbReference>
<dbReference type="PANTHER" id="PTHR10746:SF6">
    <property type="entry name" value="LARGE RIBOSOMAL SUBUNIT PROTEIN UL4M"/>
    <property type="match status" value="1"/>
</dbReference>
<dbReference type="Pfam" id="PF00573">
    <property type="entry name" value="Ribosomal_L4"/>
    <property type="match status" value="1"/>
</dbReference>
<dbReference type="SUPFAM" id="SSF52166">
    <property type="entry name" value="Ribosomal protein L4"/>
    <property type="match status" value="1"/>
</dbReference>
<gene>
    <name evidence="1" type="primary">rplD</name>
    <name type="ordered locus">Swol_2332</name>
</gene>
<protein>
    <recommendedName>
        <fullName evidence="1">Large ribosomal subunit protein uL4</fullName>
    </recommendedName>
    <alternativeName>
        <fullName evidence="3">50S ribosomal protein L4</fullName>
    </alternativeName>
</protein>
<accession>Q0AUI1</accession>
<comment type="function">
    <text evidence="1">One of the primary rRNA binding proteins, this protein initially binds near the 5'-end of the 23S rRNA. It is important during the early stages of 50S assembly. It makes multiple contacts with different domains of the 23S rRNA in the assembled 50S subunit and ribosome.</text>
</comment>
<comment type="function">
    <text evidence="1">Forms part of the polypeptide exit tunnel.</text>
</comment>
<comment type="subunit">
    <text evidence="1">Part of the 50S ribosomal subunit.</text>
</comment>
<comment type="similarity">
    <text evidence="1">Belongs to the universal ribosomal protein uL4 family.</text>
</comment>
<name>RL4_SYNWW</name>
<evidence type="ECO:0000255" key="1">
    <source>
        <dbReference type="HAMAP-Rule" id="MF_01328"/>
    </source>
</evidence>
<evidence type="ECO:0000256" key="2">
    <source>
        <dbReference type="SAM" id="MobiDB-lite"/>
    </source>
</evidence>
<evidence type="ECO:0000305" key="3"/>
<reference key="1">
    <citation type="journal article" date="2010" name="Environ. Microbiol.">
        <title>The genome of Syntrophomonas wolfei: new insights into syntrophic metabolism and biohydrogen production.</title>
        <authorList>
            <person name="Sieber J.R."/>
            <person name="Sims D.R."/>
            <person name="Han C."/>
            <person name="Kim E."/>
            <person name="Lykidis A."/>
            <person name="Lapidus A.L."/>
            <person name="McDonnald E."/>
            <person name="Rohlin L."/>
            <person name="Culley D.E."/>
            <person name="Gunsalus R."/>
            <person name="McInerney M.J."/>
        </authorList>
    </citation>
    <scope>NUCLEOTIDE SEQUENCE [LARGE SCALE GENOMIC DNA]</scope>
    <source>
        <strain>DSM 2245B / Goettingen</strain>
    </source>
</reference>
<proteinExistence type="inferred from homology"/>
<organism>
    <name type="scientific">Syntrophomonas wolfei subsp. wolfei (strain DSM 2245B / Goettingen)</name>
    <dbReference type="NCBI Taxonomy" id="335541"/>
    <lineage>
        <taxon>Bacteria</taxon>
        <taxon>Bacillati</taxon>
        <taxon>Bacillota</taxon>
        <taxon>Clostridia</taxon>
        <taxon>Eubacteriales</taxon>
        <taxon>Syntrophomonadaceae</taxon>
        <taxon>Syntrophomonas</taxon>
    </lineage>
</organism>
<sequence>MPKVALYDMSGAQVGEIELNDSVFGIKPNQAVMFDFVKMQLANKRAGTASSKTRAEVRGGGKKPWRQKGTGRARVGSSRNPVWTKGGVAFGPRPRDFSYRLPRKVRRLAMKSALSSKVLDNNIVVLDSLTFDEPKTRLMVQTLKSLPVGKKTLVVTAYGDPNVIKSARNIPGVKPLRADFINVYDLLNYDTLLITREAVARIEEVFA</sequence>